<keyword id="KW-0067">ATP-binding</keyword>
<keyword id="KW-0319">Glycerol metabolism</keyword>
<keyword id="KW-0418">Kinase</keyword>
<keyword id="KW-0547">Nucleotide-binding</keyword>
<keyword id="KW-0808">Transferase</keyword>
<proteinExistence type="inferred from homology"/>
<protein>
    <recommendedName>
        <fullName evidence="1">Glycerol kinase</fullName>
        <ecNumber evidence="1">2.7.1.30</ecNumber>
    </recommendedName>
    <alternativeName>
        <fullName evidence="1">ATP:glycerol 3-phosphotransferase</fullName>
    </alternativeName>
    <alternativeName>
        <fullName evidence="1">Glycerokinase</fullName>
        <shortName evidence="1">GK</shortName>
    </alternativeName>
</protein>
<organism>
    <name type="scientific">Mycolicibacterium gilvum (strain PYR-GCK)</name>
    <name type="common">Mycobacterium gilvum (strain PYR-GCK)</name>
    <dbReference type="NCBI Taxonomy" id="350054"/>
    <lineage>
        <taxon>Bacteria</taxon>
        <taxon>Bacillati</taxon>
        <taxon>Actinomycetota</taxon>
        <taxon>Actinomycetes</taxon>
        <taxon>Mycobacteriales</taxon>
        <taxon>Mycobacteriaceae</taxon>
        <taxon>Mycolicibacterium</taxon>
    </lineage>
</organism>
<comment type="function">
    <text evidence="1">Key enzyme in the regulation of glycerol uptake and metabolism. Catalyzes the phosphorylation of glycerol to yield sn-glycerol 3-phosphate.</text>
</comment>
<comment type="catalytic activity">
    <reaction evidence="1">
        <text>glycerol + ATP = sn-glycerol 3-phosphate + ADP + H(+)</text>
        <dbReference type="Rhea" id="RHEA:21644"/>
        <dbReference type="ChEBI" id="CHEBI:15378"/>
        <dbReference type="ChEBI" id="CHEBI:17754"/>
        <dbReference type="ChEBI" id="CHEBI:30616"/>
        <dbReference type="ChEBI" id="CHEBI:57597"/>
        <dbReference type="ChEBI" id="CHEBI:456216"/>
        <dbReference type="EC" id="2.7.1.30"/>
    </reaction>
</comment>
<comment type="activity regulation">
    <text evidence="1">Inhibited by fructose 1,6-bisphosphate (FBP).</text>
</comment>
<comment type="pathway">
    <text evidence="1">Polyol metabolism; glycerol degradation via glycerol kinase pathway; sn-glycerol 3-phosphate from glycerol: step 1/1.</text>
</comment>
<comment type="similarity">
    <text evidence="1">Belongs to the FGGY kinase family.</text>
</comment>
<name>GLPK_MYCGI</name>
<gene>
    <name evidence="1" type="primary">glpK</name>
    <name type="ordered locus">Mflv_1327</name>
</gene>
<accession>A4T5Y1</accession>
<sequence length="505" mass="54768">MADFVAAIDQGTTSTRCMIFDHDGAEVGRHQLEHEQILPKAGWVEHNPVEIWERTGSVLATALNATKLATTDLAALGITNQRETSLVWNRHTGRPYYNAIVWQDTRTDRIASALDRDGRGDVIRRKAGLPPATYFSGGKLQWLLENVDGLRADAANGDALFGTTDTWVLWNLTGGHRGGVHVTDVTNASRTMLMNLETLDWDDELLGFFDIPRQMLPEIRPSSSPQPYGVTVETGPADGEIPITGILGDQQAAMVGQVCLDVGEAKNTYGTGNFLLLNTGEKIVRSDNGLLTTVCYQFGDSKPVYALEGSIAVTGSAVQWLRDQLGIISGASQSESLARQVDDNGGVYFVPAFSGLFAPYWRSDARGAIVGLSRFNTNAHVARATLEAICYQSRDVVDAMAADSGVPLEVLKVDGGITANDLCMQIQADVLGVDVVKPVVAETTALGAAYAAGLAVGFWEGADDLRANWQEGRRWSPQWSDEQRAEGYAGWQKAVHRTLDWVDVE</sequence>
<feature type="chain" id="PRO_1000077422" description="Glycerol kinase">
    <location>
        <begin position="1"/>
        <end position="505"/>
    </location>
</feature>
<feature type="binding site" evidence="1">
    <location>
        <position position="12"/>
    </location>
    <ligand>
        <name>ADP</name>
        <dbReference type="ChEBI" id="CHEBI:456216"/>
    </ligand>
</feature>
<feature type="binding site" evidence="1">
    <location>
        <position position="12"/>
    </location>
    <ligand>
        <name>ATP</name>
        <dbReference type="ChEBI" id="CHEBI:30616"/>
    </ligand>
</feature>
<feature type="binding site" evidence="1">
    <location>
        <position position="12"/>
    </location>
    <ligand>
        <name>sn-glycerol 3-phosphate</name>
        <dbReference type="ChEBI" id="CHEBI:57597"/>
    </ligand>
</feature>
<feature type="binding site" evidence="1">
    <location>
        <position position="13"/>
    </location>
    <ligand>
        <name>ATP</name>
        <dbReference type="ChEBI" id="CHEBI:30616"/>
    </ligand>
</feature>
<feature type="binding site" evidence="1">
    <location>
        <position position="14"/>
    </location>
    <ligand>
        <name>ATP</name>
        <dbReference type="ChEBI" id="CHEBI:30616"/>
    </ligand>
</feature>
<feature type="binding site" evidence="1">
    <location>
        <position position="16"/>
    </location>
    <ligand>
        <name>ADP</name>
        <dbReference type="ChEBI" id="CHEBI:456216"/>
    </ligand>
</feature>
<feature type="binding site" evidence="1">
    <location>
        <position position="82"/>
    </location>
    <ligand>
        <name>glycerol</name>
        <dbReference type="ChEBI" id="CHEBI:17754"/>
    </ligand>
</feature>
<feature type="binding site" evidence="1">
    <location>
        <position position="82"/>
    </location>
    <ligand>
        <name>sn-glycerol 3-phosphate</name>
        <dbReference type="ChEBI" id="CHEBI:57597"/>
    </ligand>
</feature>
<feature type="binding site" evidence="1">
    <location>
        <position position="83"/>
    </location>
    <ligand>
        <name>glycerol</name>
        <dbReference type="ChEBI" id="CHEBI:17754"/>
    </ligand>
</feature>
<feature type="binding site" evidence="1">
    <location>
        <position position="83"/>
    </location>
    <ligand>
        <name>sn-glycerol 3-phosphate</name>
        <dbReference type="ChEBI" id="CHEBI:57597"/>
    </ligand>
</feature>
<feature type="binding site" evidence="1">
    <location>
        <position position="134"/>
    </location>
    <ligand>
        <name>glycerol</name>
        <dbReference type="ChEBI" id="CHEBI:17754"/>
    </ligand>
</feature>
<feature type="binding site" evidence="1">
    <location>
        <position position="134"/>
    </location>
    <ligand>
        <name>sn-glycerol 3-phosphate</name>
        <dbReference type="ChEBI" id="CHEBI:57597"/>
    </ligand>
</feature>
<feature type="binding site" evidence="1">
    <location>
        <position position="249"/>
    </location>
    <ligand>
        <name>glycerol</name>
        <dbReference type="ChEBI" id="CHEBI:17754"/>
    </ligand>
</feature>
<feature type="binding site" evidence="1">
    <location>
        <position position="249"/>
    </location>
    <ligand>
        <name>sn-glycerol 3-phosphate</name>
        <dbReference type="ChEBI" id="CHEBI:57597"/>
    </ligand>
</feature>
<feature type="binding site" evidence="1">
    <location>
        <position position="250"/>
    </location>
    <ligand>
        <name>glycerol</name>
        <dbReference type="ChEBI" id="CHEBI:17754"/>
    </ligand>
</feature>
<feature type="binding site" evidence="1">
    <location>
        <position position="271"/>
    </location>
    <ligand>
        <name>ADP</name>
        <dbReference type="ChEBI" id="CHEBI:456216"/>
    </ligand>
</feature>
<feature type="binding site" evidence="1">
    <location>
        <position position="271"/>
    </location>
    <ligand>
        <name>ATP</name>
        <dbReference type="ChEBI" id="CHEBI:30616"/>
    </ligand>
</feature>
<feature type="binding site" evidence="1">
    <location>
        <position position="315"/>
    </location>
    <ligand>
        <name>ADP</name>
        <dbReference type="ChEBI" id="CHEBI:456216"/>
    </ligand>
</feature>
<feature type="binding site" evidence="1">
    <location>
        <position position="315"/>
    </location>
    <ligand>
        <name>ATP</name>
        <dbReference type="ChEBI" id="CHEBI:30616"/>
    </ligand>
</feature>
<feature type="binding site" evidence="1">
    <location>
        <position position="319"/>
    </location>
    <ligand>
        <name>ATP</name>
        <dbReference type="ChEBI" id="CHEBI:30616"/>
    </ligand>
</feature>
<feature type="binding site" evidence="1">
    <location>
        <position position="416"/>
    </location>
    <ligand>
        <name>ADP</name>
        <dbReference type="ChEBI" id="CHEBI:456216"/>
    </ligand>
</feature>
<feature type="binding site" evidence="1">
    <location>
        <position position="416"/>
    </location>
    <ligand>
        <name>ATP</name>
        <dbReference type="ChEBI" id="CHEBI:30616"/>
    </ligand>
</feature>
<feature type="binding site" evidence="1">
    <location>
        <position position="420"/>
    </location>
    <ligand>
        <name>ADP</name>
        <dbReference type="ChEBI" id="CHEBI:456216"/>
    </ligand>
</feature>
<dbReference type="EC" id="2.7.1.30" evidence="1"/>
<dbReference type="EMBL" id="CP000656">
    <property type="protein sequence ID" value="ABP43809.1"/>
    <property type="molecule type" value="Genomic_DNA"/>
</dbReference>
<dbReference type="SMR" id="A4T5Y1"/>
<dbReference type="STRING" id="350054.Mflv_1327"/>
<dbReference type="KEGG" id="mgi:Mflv_1327"/>
<dbReference type="eggNOG" id="COG0554">
    <property type="taxonomic scope" value="Bacteria"/>
</dbReference>
<dbReference type="HOGENOM" id="CLU_009281_2_3_11"/>
<dbReference type="OrthoDB" id="9805576at2"/>
<dbReference type="UniPathway" id="UPA00618">
    <property type="reaction ID" value="UER00672"/>
</dbReference>
<dbReference type="GO" id="GO:0005829">
    <property type="term" value="C:cytosol"/>
    <property type="evidence" value="ECO:0007669"/>
    <property type="project" value="TreeGrafter"/>
</dbReference>
<dbReference type="GO" id="GO:0005524">
    <property type="term" value="F:ATP binding"/>
    <property type="evidence" value="ECO:0007669"/>
    <property type="project" value="UniProtKB-UniRule"/>
</dbReference>
<dbReference type="GO" id="GO:0004370">
    <property type="term" value="F:glycerol kinase activity"/>
    <property type="evidence" value="ECO:0000250"/>
    <property type="project" value="UniProtKB"/>
</dbReference>
<dbReference type="GO" id="GO:0019563">
    <property type="term" value="P:glycerol catabolic process"/>
    <property type="evidence" value="ECO:0007669"/>
    <property type="project" value="UniProtKB-UniRule"/>
</dbReference>
<dbReference type="GO" id="GO:0006071">
    <property type="term" value="P:glycerol metabolic process"/>
    <property type="evidence" value="ECO:0000250"/>
    <property type="project" value="UniProtKB"/>
</dbReference>
<dbReference type="GO" id="GO:0006072">
    <property type="term" value="P:glycerol-3-phosphate metabolic process"/>
    <property type="evidence" value="ECO:0007669"/>
    <property type="project" value="InterPro"/>
</dbReference>
<dbReference type="CDD" id="cd07769">
    <property type="entry name" value="ASKHA_NBD_FGGY_GK"/>
    <property type="match status" value="1"/>
</dbReference>
<dbReference type="FunFam" id="3.30.420.40:FF:000007">
    <property type="entry name" value="Glycerol kinase"/>
    <property type="match status" value="1"/>
</dbReference>
<dbReference type="FunFam" id="3.30.420.40:FF:000008">
    <property type="entry name" value="Glycerol kinase"/>
    <property type="match status" value="1"/>
</dbReference>
<dbReference type="Gene3D" id="3.30.420.40">
    <property type="match status" value="2"/>
</dbReference>
<dbReference type="HAMAP" id="MF_00186">
    <property type="entry name" value="Glycerol_kin"/>
    <property type="match status" value="1"/>
</dbReference>
<dbReference type="InterPro" id="IPR043129">
    <property type="entry name" value="ATPase_NBD"/>
</dbReference>
<dbReference type="InterPro" id="IPR000577">
    <property type="entry name" value="Carb_kinase_FGGY"/>
</dbReference>
<dbReference type="InterPro" id="IPR018483">
    <property type="entry name" value="Carb_kinase_FGGY_CS"/>
</dbReference>
<dbReference type="InterPro" id="IPR018485">
    <property type="entry name" value="FGGY_C"/>
</dbReference>
<dbReference type="InterPro" id="IPR018484">
    <property type="entry name" value="FGGY_N"/>
</dbReference>
<dbReference type="InterPro" id="IPR005999">
    <property type="entry name" value="Glycerol_kin"/>
</dbReference>
<dbReference type="NCBIfam" id="TIGR01311">
    <property type="entry name" value="glycerol_kin"/>
    <property type="match status" value="1"/>
</dbReference>
<dbReference type="NCBIfam" id="NF000756">
    <property type="entry name" value="PRK00047.1"/>
    <property type="match status" value="1"/>
</dbReference>
<dbReference type="PANTHER" id="PTHR10196:SF69">
    <property type="entry name" value="GLYCEROL KINASE"/>
    <property type="match status" value="1"/>
</dbReference>
<dbReference type="PANTHER" id="PTHR10196">
    <property type="entry name" value="SUGAR KINASE"/>
    <property type="match status" value="1"/>
</dbReference>
<dbReference type="Pfam" id="PF02782">
    <property type="entry name" value="FGGY_C"/>
    <property type="match status" value="1"/>
</dbReference>
<dbReference type="Pfam" id="PF00370">
    <property type="entry name" value="FGGY_N"/>
    <property type="match status" value="1"/>
</dbReference>
<dbReference type="PIRSF" id="PIRSF000538">
    <property type="entry name" value="GlpK"/>
    <property type="match status" value="1"/>
</dbReference>
<dbReference type="SUPFAM" id="SSF53067">
    <property type="entry name" value="Actin-like ATPase domain"/>
    <property type="match status" value="2"/>
</dbReference>
<dbReference type="PROSITE" id="PS00933">
    <property type="entry name" value="FGGY_KINASES_1"/>
    <property type="match status" value="1"/>
</dbReference>
<dbReference type="PROSITE" id="PS00445">
    <property type="entry name" value="FGGY_KINASES_2"/>
    <property type="match status" value="1"/>
</dbReference>
<evidence type="ECO:0000255" key="1">
    <source>
        <dbReference type="HAMAP-Rule" id="MF_00186"/>
    </source>
</evidence>
<reference key="1">
    <citation type="submission" date="2007-04" db="EMBL/GenBank/DDBJ databases">
        <title>Complete sequence of chromosome of Mycobacterium gilvum PYR-GCK.</title>
        <authorList>
            <consortium name="US DOE Joint Genome Institute"/>
            <person name="Copeland A."/>
            <person name="Lucas S."/>
            <person name="Lapidus A."/>
            <person name="Barry K."/>
            <person name="Detter J.C."/>
            <person name="Glavina del Rio T."/>
            <person name="Hammon N."/>
            <person name="Israni S."/>
            <person name="Dalin E."/>
            <person name="Tice H."/>
            <person name="Pitluck S."/>
            <person name="Chain P."/>
            <person name="Malfatti S."/>
            <person name="Shin M."/>
            <person name="Vergez L."/>
            <person name="Schmutz J."/>
            <person name="Larimer F."/>
            <person name="Land M."/>
            <person name="Hauser L."/>
            <person name="Kyrpides N."/>
            <person name="Mikhailova N."/>
            <person name="Miller C."/>
            <person name="Richardson P."/>
        </authorList>
    </citation>
    <scope>NUCLEOTIDE SEQUENCE [LARGE SCALE GENOMIC DNA]</scope>
    <source>
        <strain>PYR-GCK</strain>
    </source>
</reference>